<organism>
    <name type="scientific">Cereibacter sphaeroides</name>
    <name type="common">Rhodobacter sphaeroides</name>
    <dbReference type="NCBI Taxonomy" id="1063"/>
    <lineage>
        <taxon>Bacteria</taxon>
        <taxon>Pseudomonadati</taxon>
        <taxon>Pseudomonadota</taxon>
        <taxon>Alphaproteobacteria</taxon>
        <taxon>Rhodobacterales</taxon>
        <taxon>Paracoccaceae</taxon>
        <taxon>Cereibacter</taxon>
    </lineage>
</organism>
<feature type="chain" id="PRO_0000183459" description="Cytochrome c oxidase subunit 1">
    <location>
        <begin position="1"/>
        <end position="566"/>
    </location>
</feature>
<feature type="transmembrane region" description="Helical" evidence="2">
    <location>
        <begin position="29"/>
        <end position="49"/>
    </location>
</feature>
<feature type="transmembrane region" description="Helical" evidence="2">
    <location>
        <begin position="97"/>
        <end position="117"/>
    </location>
</feature>
<feature type="transmembrane region" description="Helical" evidence="2">
    <location>
        <begin position="141"/>
        <end position="161"/>
    </location>
</feature>
<feature type="transmembrane region" description="Helical" evidence="2">
    <location>
        <begin position="189"/>
        <end position="209"/>
    </location>
</feature>
<feature type="transmembrane region" description="Helical" evidence="2">
    <location>
        <begin position="227"/>
        <end position="247"/>
    </location>
</feature>
<feature type="transmembrane region" description="Helical" evidence="2">
    <location>
        <begin position="278"/>
        <end position="298"/>
    </location>
</feature>
<feature type="transmembrane region" description="Helical" evidence="2">
    <location>
        <begin position="310"/>
        <end position="330"/>
    </location>
</feature>
<feature type="transmembrane region" description="Helical" evidence="2">
    <location>
        <begin position="348"/>
        <end position="368"/>
    </location>
</feature>
<feature type="transmembrane region" description="Helical" evidence="2">
    <location>
        <begin position="381"/>
        <end position="401"/>
    </location>
</feature>
<feature type="transmembrane region" description="Helical" evidence="2">
    <location>
        <begin position="420"/>
        <end position="440"/>
    </location>
</feature>
<feature type="transmembrane region" description="Helical" evidence="2">
    <location>
        <begin position="455"/>
        <end position="475"/>
    </location>
</feature>
<feature type="transmembrane region" description="Helical" evidence="2">
    <location>
        <begin position="499"/>
        <end position="519"/>
    </location>
</feature>
<feature type="region of interest" description="Disordered" evidence="3">
    <location>
        <begin position="543"/>
        <end position="566"/>
    </location>
</feature>
<feature type="compositionally biased region" description="Basic and acidic residues" evidence="3">
    <location>
        <begin position="549"/>
        <end position="566"/>
    </location>
</feature>
<feature type="binding site" description="axial binding residue" evidence="4">
    <location>
        <position position="102"/>
    </location>
    <ligand>
        <name>Fe(II)-heme a</name>
        <dbReference type="ChEBI" id="CHEBI:61715"/>
    </ligand>
    <ligandPart>
        <name>Fe</name>
        <dbReference type="ChEBI" id="CHEBI:18248"/>
    </ligandPart>
</feature>
<feature type="binding site" evidence="4">
    <location>
        <position position="284"/>
    </location>
    <ligand>
        <name>Cu cation</name>
        <dbReference type="ChEBI" id="CHEBI:23378"/>
        <label>B</label>
    </ligand>
</feature>
<feature type="binding site" evidence="4">
    <location>
        <position position="288"/>
    </location>
    <ligand>
        <name>Cu cation</name>
        <dbReference type="ChEBI" id="CHEBI:23378"/>
        <label>B</label>
    </ligand>
</feature>
<feature type="binding site" evidence="4">
    <location>
        <position position="333"/>
    </location>
    <ligand>
        <name>Cu cation</name>
        <dbReference type="ChEBI" id="CHEBI:23378"/>
        <label>B</label>
    </ligand>
</feature>
<feature type="binding site" evidence="4">
    <location>
        <position position="334"/>
    </location>
    <ligand>
        <name>Cu cation</name>
        <dbReference type="ChEBI" id="CHEBI:23378"/>
        <label>B</label>
    </ligand>
</feature>
<feature type="binding site" description="axial binding residue" evidence="4">
    <location>
        <position position="419"/>
    </location>
    <ligand>
        <name>heme a3</name>
        <dbReference type="ChEBI" id="CHEBI:83282"/>
    </ligand>
    <ligandPart>
        <name>Fe</name>
        <dbReference type="ChEBI" id="CHEBI:18248"/>
    </ligandPart>
</feature>
<feature type="binding site" description="axial binding residue" evidence="4">
    <location>
        <position position="421"/>
    </location>
    <ligand>
        <name>Fe(II)-heme a</name>
        <dbReference type="ChEBI" id="CHEBI:61715"/>
    </ligand>
    <ligandPart>
        <name>Fe</name>
        <dbReference type="ChEBI" id="CHEBI:18248"/>
    </ligandPart>
</feature>
<feature type="cross-link" description="1'-histidyl-3'-tyrosine (His-Tyr)" evidence="1">
    <location>
        <begin position="284"/>
        <end position="288"/>
    </location>
</feature>
<feature type="helix" evidence="7">
    <location>
        <begin position="16"/>
        <end position="20"/>
    </location>
</feature>
<feature type="helix" evidence="6">
    <location>
        <begin position="26"/>
        <end position="55"/>
    </location>
</feature>
<feature type="strand" evidence="6">
    <location>
        <begin position="57"/>
        <end position="59"/>
    </location>
</feature>
<feature type="strand" evidence="6">
    <location>
        <begin position="61"/>
        <end position="64"/>
    </location>
</feature>
<feature type="helix" evidence="6">
    <location>
        <begin position="65"/>
        <end position="69"/>
    </location>
</feature>
<feature type="helix" evidence="6">
    <location>
        <begin position="72"/>
        <end position="78"/>
    </location>
</feature>
<feature type="helix" evidence="6">
    <location>
        <begin position="85"/>
        <end position="87"/>
    </location>
</feature>
<feature type="helix" evidence="6">
    <location>
        <begin position="92"/>
        <end position="109"/>
    </location>
</feature>
<feature type="helix" evidence="6">
    <location>
        <begin position="111"/>
        <end position="115"/>
    </location>
</feature>
<feature type="turn" evidence="6">
    <location>
        <begin position="116"/>
        <end position="118"/>
    </location>
</feature>
<feature type="helix" evidence="6">
    <location>
        <begin position="119"/>
        <end position="128"/>
    </location>
</feature>
<feature type="helix" evidence="6">
    <location>
        <begin position="136"/>
        <end position="156"/>
    </location>
</feature>
<feature type="strand" evidence="5">
    <location>
        <begin position="159"/>
        <end position="161"/>
    </location>
</feature>
<feature type="helix" evidence="6">
    <location>
        <begin position="162"/>
        <end position="164"/>
    </location>
</feature>
<feature type="strand" evidence="6">
    <location>
        <begin position="165"/>
        <end position="167"/>
    </location>
</feature>
<feature type="turn" evidence="6">
    <location>
        <begin position="171"/>
        <end position="174"/>
    </location>
</feature>
<feature type="helix" evidence="6">
    <location>
        <begin position="178"/>
        <end position="181"/>
    </location>
</feature>
<feature type="strand" evidence="7">
    <location>
        <begin position="183"/>
        <end position="185"/>
    </location>
</feature>
<feature type="helix" evidence="6">
    <location>
        <begin position="186"/>
        <end position="214"/>
    </location>
</feature>
<feature type="turn" evidence="6">
    <location>
        <begin position="222"/>
        <end position="224"/>
    </location>
</feature>
<feature type="helix" evidence="6">
    <location>
        <begin position="227"/>
        <end position="258"/>
    </location>
</feature>
<feature type="helix" evidence="6">
    <location>
        <begin position="266"/>
        <end position="268"/>
    </location>
</feature>
<feature type="helix" evidence="6">
    <location>
        <begin position="272"/>
        <end position="306"/>
    </location>
</feature>
<feature type="helix" evidence="6">
    <location>
        <begin position="313"/>
        <end position="326"/>
    </location>
</feature>
<feature type="turn" evidence="8">
    <location>
        <begin position="327"/>
        <end position="330"/>
    </location>
</feature>
<feature type="helix" evidence="6">
    <location>
        <begin position="331"/>
        <end position="334"/>
    </location>
</feature>
<feature type="turn" evidence="6">
    <location>
        <begin position="336"/>
        <end position="339"/>
    </location>
</feature>
<feature type="helix" evidence="6">
    <location>
        <begin position="342"/>
        <end position="354"/>
    </location>
</feature>
<feature type="helix" evidence="6">
    <location>
        <begin position="356"/>
        <end position="370"/>
    </location>
</feature>
<feature type="helix" evidence="6">
    <location>
        <begin position="379"/>
        <end position="402"/>
    </location>
</feature>
<feature type="helix" evidence="6">
    <location>
        <begin position="404"/>
        <end position="410"/>
    </location>
</feature>
<feature type="helix" evidence="6">
    <location>
        <begin position="414"/>
        <end position="424"/>
    </location>
</feature>
<feature type="turn" evidence="6">
    <location>
        <begin position="425"/>
        <end position="427"/>
    </location>
</feature>
<feature type="helix" evidence="6">
    <location>
        <begin position="428"/>
        <end position="444"/>
    </location>
</feature>
<feature type="strand" evidence="6">
    <location>
        <begin position="445"/>
        <end position="447"/>
    </location>
</feature>
<feature type="helix" evidence="6">
    <location>
        <begin position="450"/>
        <end position="476"/>
    </location>
</feature>
<feature type="strand" evidence="6">
    <location>
        <begin position="480"/>
        <end position="482"/>
    </location>
</feature>
<feature type="helix" evidence="6">
    <location>
        <begin position="488"/>
        <end position="490"/>
    </location>
</feature>
<feature type="helix" evidence="6">
    <location>
        <begin position="491"/>
        <end position="521"/>
    </location>
</feature>
<feature type="strand" evidence="9">
    <location>
        <begin position="528"/>
        <end position="531"/>
    </location>
</feature>
<feature type="helix" evidence="6">
    <location>
        <begin position="538"/>
        <end position="541"/>
    </location>
</feature>
<feature type="helix" evidence="5">
    <location>
        <begin position="557"/>
        <end position="559"/>
    </location>
</feature>
<name>COX1_CERSP</name>
<accession>P33517</accession>
<protein>
    <recommendedName>
        <fullName>Cytochrome c oxidase subunit 1</fullName>
        <ecNumber>7.1.1.9</ecNumber>
    </recommendedName>
    <alternativeName>
        <fullName>Cytochrome aa3 subunit 1</fullName>
    </alternativeName>
    <alternativeName>
        <fullName>Cytochrome c oxidase polypeptide I</fullName>
    </alternativeName>
</protein>
<evidence type="ECO:0000250" key="1"/>
<evidence type="ECO:0000255" key="2"/>
<evidence type="ECO:0000256" key="3">
    <source>
        <dbReference type="SAM" id="MobiDB-lite"/>
    </source>
</evidence>
<evidence type="ECO:0000305" key="4"/>
<evidence type="ECO:0007829" key="5">
    <source>
        <dbReference type="PDB" id="1M56"/>
    </source>
</evidence>
<evidence type="ECO:0007829" key="6">
    <source>
        <dbReference type="PDB" id="2GSM"/>
    </source>
</evidence>
<evidence type="ECO:0007829" key="7">
    <source>
        <dbReference type="PDB" id="3DTU"/>
    </source>
</evidence>
<evidence type="ECO:0007829" key="8">
    <source>
        <dbReference type="PDB" id="5WEH"/>
    </source>
</evidence>
<evidence type="ECO:0007829" key="9">
    <source>
        <dbReference type="PDB" id="6CI0"/>
    </source>
</evidence>
<proteinExistence type="evidence at protein level"/>
<keyword id="KW-0002">3D-structure</keyword>
<keyword id="KW-1003">Cell membrane</keyword>
<keyword id="KW-0186">Copper</keyword>
<keyword id="KW-0249">Electron transport</keyword>
<keyword id="KW-0349">Heme</keyword>
<keyword id="KW-0375">Hydrogen ion transport</keyword>
<keyword id="KW-0406">Ion transport</keyword>
<keyword id="KW-0408">Iron</keyword>
<keyword id="KW-0472">Membrane</keyword>
<keyword id="KW-0479">Metal-binding</keyword>
<keyword id="KW-0679">Respiratory chain</keyword>
<keyword id="KW-1278">Translocase</keyword>
<keyword id="KW-0812">Transmembrane</keyword>
<keyword id="KW-1133">Transmembrane helix</keyword>
<keyword id="KW-0813">Transport</keyword>
<reference key="1">
    <citation type="journal article" date="1992" name="Mol. Microbiol.">
        <title>Cloning, sequencing and deletion from the chromosome of the gene encoding subunit I of the aa3-type cytochrome c oxidase of Rhodobacter sphaeroides.</title>
        <authorList>
            <person name="Shapleigh J.P."/>
            <person name="Gennis R.B."/>
        </authorList>
    </citation>
    <scope>NUCLEOTIDE SEQUENCE [GENOMIC DNA]</scope>
    <source>
        <strain>Ga</strain>
    </source>
</reference>
<reference key="2">
    <citation type="submission" date="2002-07" db="EMBL/GenBank/DDBJ databases">
        <authorList>
            <person name="Shapleigh J.P."/>
            <person name="Gennis R.B."/>
        </authorList>
    </citation>
    <scope>SEQUENCE REVISION TO 436-439 AND 518-521</scope>
</reference>
<comment type="function">
    <text>Cytochrome c oxidase is the component of the respiratory chain that catalyzes the reduction of oxygen to water. Subunits 1-3 form the functional core of the enzyme complex. Co I is the catalytic subunit of the enzyme. Electrons originating in cytochrome c are transferred via the copper A center of subunit 2 and heme a of subunit 1 to the bimetallic center formed by heme a3 and copper B. This cytochrome c oxidase shows proton pump activity across the membrane in addition to the electron transfer.</text>
</comment>
<comment type="catalytic activity">
    <reaction>
        <text>4 Fe(II)-[cytochrome c] + O2 + 8 H(+)(in) = 4 Fe(III)-[cytochrome c] + 2 H2O + 4 H(+)(out)</text>
        <dbReference type="Rhea" id="RHEA:11436"/>
        <dbReference type="Rhea" id="RHEA-COMP:10350"/>
        <dbReference type="Rhea" id="RHEA-COMP:14399"/>
        <dbReference type="ChEBI" id="CHEBI:15377"/>
        <dbReference type="ChEBI" id="CHEBI:15378"/>
        <dbReference type="ChEBI" id="CHEBI:15379"/>
        <dbReference type="ChEBI" id="CHEBI:29033"/>
        <dbReference type="ChEBI" id="CHEBI:29034"/>
        <dbReference type="EC" id="7.1.1.9"/>
    </reaction>
</comment>
<comment type="cofactor">
    <cofactor>
        <name>Cu(2+)</name>
        <dbReference type="ChEBI" id="CHEBI:29036"/>
    </cofactor>
    <text>Binds 1 copper B ion per subunit.</text>
</comment>
<comment type="cofactor">
    <cofactor>
        <name>heme</name>
        <dbReference type="ChEBI" id="CHEBI:30413"/>
    </cofactor>
    <text>Binds 2 heme groups per subunit.</text>
</comment>
<comment type="pathway">
    <text>Energy metabolism; oxidative phosphorylation.</text>
</comment>
<comment type="interaction">
    <interactant intactId="EBI-1034008">
        <id>P33517</id>
    </interactant>
    <interactant intactId="EBI-1033998">
        <id>Q03736</id>
        <label>ctaC</label>
    </interactant>
    <organismsDiffer>false</organismsDiffer>
    <experiments>3</experiments>
</comment>
<comment type="subcellular location">
    <subcellularLocation>
        <location>Cell membrane</location>
        <topology>Multi-pass membrane protein</topology>
    </subcellularLocation>
</comment>
<comment type="similarity">
    <text evidence="4">Belongs to the heme-copper respiratory oxidase family.</text>
</comment>
<gene>
    <name type="primary">ctaD</name>
</gene>
<dbReference type="EC" id="7.1.1.9"/>
<dbReference type="EMBL" id="X62645">
    <property type="protein sequence ID" value="CAA44514.2"/>
    <property type="molecule type" value="Genomic_DNA"/>
</dbReference>
<dbReference type="PIR" id="S20534">
    <property type="entry name" value="S20534"/>
</dbReference>
<dbReference type="RefSeq" id="WP_011337048.1">
    <property type="nucleotide sequence ID" value="NZ_WSNV01000001.1"/>
</dbReference>
<dbReference type="PDB" id="1M56">
    <property type="method" value="X-ray"/>
    <property type="resolution" value="2.30 A"/>
    <property type="chains" value="A/G=1-566"/>
</dbReference>
<dbReference type="PDB" id="1M57">
    <property type="method" value="X-ray"/>
    <property type="resolution" value="3.00 A"/>
    <property type="chains" value="A/G=1-566"/>
</dbReference>
<dbReference type="PDB" id="2GSM">
    <property type="method" value="X-ray"/>
    <property type="resolution" value="2.00 A"/>
    <property type="chains" value="A/C=1-566"/>
</dbReference>
<dbReference type="PDB" id="3DTU">
    <property type="method" value="X-ray"/>
    <property type="resolution" value="2.15 A"/>
    <property type="chains" value="A/C=1-566"/>
</dbReference>
<dbReference type="PDB" id="3FYE">
    <property type="method" value="X-ray"/>
    <property type="resolution" value="2.15 A"/>
    <property type="chains" value="A/C=1-566"/>
</dbReference>
<dbReference type="PDB" id="3FYI">
    <property type="method" value="X-ray"/>
    <property type="resolution" value="2.20 A"/>
    <property type="chains" value="A/C=1-566"/>
</dbReference>
<dbReference type="PDB" id="5WEH">
    <property type="method" value="X-ray"/>
    <property type="resolution" value="3.45 A"/>
    <property type="chains" value="A/G=1-566"/>
</dbReference>
<dbReference type="PDB" id="6CI0">
    <property type="method" value="X-ray"/>
    <property type="resolution" value="2.40 A"/>
    <property type="chains" value="A/C=17-551"/>
</dbReference>
<dbReference type="PDBsum" id="1M56"/>
<dbReference type="PDBsum" id="1M57"/>
<dbReference type="PDBsum" id="2GSM"/>
<dbReference type="PDBsum" id="3DTU"/>
<dbReference type="PDBsum" id="3FYE"/>
<dbReference type="PDBsum" id="3FYI"/>
<dbReference type="PDBsum" id="5WEH"/>
<dbReference type="PDBsum" id="6CI0"/>
<dbReference type="SMR" id="P33517"/>
<dbReference type="DIP" id="DIP-38013N"/>
<dbReference type="IntAct" id="P33517">
    <property type="interactions" value="3"/>
</dbReference>
<dbReference type="DrugBank" id="DB03619">
    <property type="generic name" value="Deoxycholic acid"/>
</dbReference>
<dbReference type="TCDB" id="3.D.4.6.2">
    <property type="family name" value="the proton-translocating cytochrome oxidase (cox) superfamily"/>
</dbReference>
<dbReference type="GeneID" id="67445668"/>
<dbReference type="OMA" id="WAMMSIG"/>
<dbReference type="BRENDA" id="7.1.1.9">
    <property type="organism ID" value="5383"/>
</dbReference>
<dbReference type="UniPathway" id="UPA00705"/>
<dbReference type="EvolutionaryTrace" id="P33517"/>
<dbReference type="GO" id="GO:0005886">
    <property type="term" value="C:plasma membrane"/>
    <property type="evidence" value="ECO:0007669"/>
    <property type="project" value="UniProtKB-SubCell"/>
</dbReference>
<dbReference type="GO" id="GO:0045277">
    <property type="term" value="C:respiratory chain complex IV"/>
    <property type="evidence" value="ECO:0007669"/>
    <property type="project" value="InterPro"/>
</dbReference>
<dbReference type="GO" id="GO:0004129">
    <property type="term" value="F:cytochrome-c oxidase activity"/>
    <property type="evidence" value="ECO:0007669"/>
    <property type="project" value="UniProtKB-EC"/>
</dbReference>
<dbReference type="GO" id="GO:0020037">
    <property type="term" value="F:heme binding"/>
    <property type="evidence" value="ECO:0007669"/>
    <property type="project" value="InterPro"/>
</dbReference>
<dbReference type="GO" id="GO:0046872">
    <property type="term" value="F:metal ion binding"/>
    <property type="evidence" value="ECO:0007669"/>
    <property type="project" value="UniProtKB-KW"/>
</dbReference>
<dbReference type="GO" id="GO:0015990">
    <property type="term" value="P:electron transport coupled proton transport"/>
    <property type="evidence" value="ECO:0007669"/>
    <property type="project" value="InterPro"/>
</dbReference>
<dbReference type="GO" id="GO:0006119">
    <property type="term" value="P:oxidative phosphorylation"/>
    <property type="evidence" value="ECO:0007669"/>
    <property type="project" value="UniProtKB-UniPathway"/>
</dbReference>
<dbReference type="GO" id="GO:0022904">
    <property type="term" value="P:respiratory electron transport chain"/>
    <property type="evidence" value="ECO:0007669"/>
    <property type="project" value="TreeGrafter"/>
</dbReference>
<dbReference type="CDD" id="cd01663">
    <property type="entry name" value="Cyt_c_Oxidase_I"/>
    <property type="match status" value="1"/>
</dbReference>
<dbReference type="FunFam" id="1.20.210.10:FF:000004">
    <property type="entry name" value="Cytochrome c oxidase subunit 1"/>
    <property type="match status" value="1"/>
</dbReference>
<dbReference type="Gene3D" id="1.20.210.10">
    <property type="entry name" value="Cytochrome c oxidase-like, subunit I domain"/>
    <property type="match status" value="1"/>
</dbReference>
<dbReference type="InterPro" id="IPR023616">
    <property type="entry name" value="Cyt_c_oxase-like_su1_dom"/>
</dbReference>
<dbReference type="InterPro" id="IPR036927">
    <property type="entry name" value="Cyt_c_oxase-like_su1_sf"/>
</dbReference>
<dbReference type="InterPro" id="IPR000883">
    <property type="entry name" value="Cyt_C_Oxase_1"/>
</dbReference>
<dbReference type="InterPro" id="IPR023615">
    <property type="entry name" value="Cyt_c_Oxase_su1_BS"/>
</dbReference>
<dbReference type="InterPro" id="IPR033944">
    <property type="entry name" value="Cyt_c_oxase_su1_dom"/>
</dbReference>
<dbReference type="InterPro" id="IPR014241">
    <property type="entry name" value="Cyt_c_oxidase_su1_bac"/>
</dbReference>
<dbReference type="NCBIfam" id="TIGR02891">
    <property type="entry name" value="CtaD_CoxA"/>
    <property type="match status" value="1"/>
</dbReference>
<dbReference type="PANTHER" id="PTHR10422">
    <property type="entry name" value="CYTOCHROME C OXIDASE SUBUNIT 1"/>
    <property type="match status" value="1"/>
</dbReference>
<dbReference type="PANTHER" id="PTHR10422:SF18">
    <property type="entry name" value="CYTOCHROME C OXIDASE SUBUNIT 1"/>
    <property type="match status" value="1"/>
</dbReference>
<dbReference type="Pfam" id="PF00115">
    <property type="entry name" value="COX1"/>
    <property type="match status" value="1"/>
</dbReference>
<dbReference type="PRINTS" id="PR01165">
    <property type="entry name" value="CYCOXIDASEI"/>
</dbReference>
<dbReference type="SUPFAM" id="SSF81442">
    <property type="entry name" value="Cytochrome c oxidase subunit I-like"/>
    <property type="match status" value="1"/>
</dbReference>
<dbReference type="PROSITE" id="PS50855">
    <property type="entry name" value="COX1"/>
    <property type="match status" value="1"/>
</dbReference>
<dbReference type="PROSITE" id="PS00077">
    <property type="entry name" value="COX1_CUB"/>
    <property type="match status" value="1"/>
</dbReference>
<sequence>MADAAIHGHEHDRRGFFTRWFMSTNHKDIGVLYLFTGGLVGLISVAFTVYMRMELMAPGVQFMCAEHLESGLVKGFFQSLWPSAVENCTPNGHLWNVMITGHGILMMFFVVIPALFGGFGNYFMPLHIGAPDMAFPRMNNLSYWLYVAGTSLAVASLFAPGGNGQLGSGIGWVLYPPLSTSESGYSTDLAIFAVHLSGASSILGAINMITTFLNMRAPGMTMHKVPLFAWSIFVTAWLILLALPVLAGAITMLLTDRNFGTTFFQPSGGGDPVLYQHILWFFGHPEVYIIVLPAFGIVSHVIATFAKKPIFGYLPMVYAMVAIGVLGFVVWAHHMYTAGLSLTQQSYFMMATMVIAVPTGIKIFSWIATMWGGSIELKTPMLWALGFLFLFTVGGVTGIVLSQASVDRYYHDTYYVVAHFHYVMSLGAVFGIFAGIYFWIGKMSGRQYPEWAGKLHFWMMFVGANLTFFPQHFLGRQGMPRRYIDYPEAFATWNFVSSLGAFLSFASFLFFLGVIFYTLTRGARVTANNYWNEHADTLEWTLTSPPPEHTFEQLPKREDWERAPAH</sequence>